<gene>
    <name evidence="1" type="primary">resA</name>
    <name type="ordered locus">BT9727_1356</name>
</gene>
<organism>
    <name type="scientific">Bacillus thuringiensis subsp. konkukian (strain 97-27)</name>
    <dbReference type="NCBI Taxonomy" id="281309"/>
    <lineage>
        <taxon>Bacteria</taxon>
        <taxon>Bacillati</taxon>
        <taxon>Bacillota</taxon>
        <taxon>Bacilli</taxon>
        <taxon>Bacillales</taxon>
        <taxon>Bacillaceae</taxon>
        <taxon>Bacillus</taxon>
        <taxon>Bacillus cereus group</taxon>
    </lineage>
</organism>
<evidence type="ECO:0000255" key="1">
    <source>
        <dbReference type="HAMAP-Rule" id="MF_01319"/>
    </source>
</evidence>
<name>RESA_BACHK</name>
<proteinExistence type="inferred from homology"/>
<comment type="function">
    <text evidence="1">Thiol-disulfide oxidoreductase which is required in disulfide reduction during c-type cytochrome synthesis. May accept reducing equivalents from CcdA, leading to breakage of disulfide bonds in apocytochrome c; following this reduction heme can be covalently attached.</text>
</comment>
<comment type="pathway">
    <text evidence="1">Protein modification; cytochrome c assembly.</text>
</comment>
<comment type="subcellular location">
    <subcellularLocation>
        <location evidence="1">Cell membrane</location>
        <topology evidence="1">Single-pass type II membrane protein</topology>
    </subcellularLocation>
    <text evidence="1">The thioredoxin-like motif is exposed on the outside of the membrane.</text>
</comment>
<comment type="similarity">
    <text evidence="1">Belongs to the thioredoxin family. ResA subfamily.</text>
</comment>
<sequence>MKKNRLLFRVIILLILCGAVGFTLYQGYFTKEEKMEIGKEAPNFVVTDLEGKKIELKDFKGKGVFLNFWGTWCKPCEKEMPYMNELYPKYKEKGVEIIALDADETDIAVKNFVKQYDLKFPVAIDKGGEIIKTYGVIPLPTSFLIDKDGKVIQEIKGEQTKEQLEEYLKKITP</sequence>
<feature type="chain" id="PRO_0000308270" description="Thiol-disulfide oxidoreductase ResA">
    <location>
        <begin position="1"/>
        <end position="173"/>
    </location>
</feature>
<feature type="transmembrane region" description="Helical; Signal-anchor for type II membrane protein" evidence="1">
    <location>
        <begin position="10"/>
        <end position="29"/>
    </location>
</feature>
<feature type="domain" description="Thioredoxin" evidence="1">
    <location>
        <begin position="35"/>
        <end position="173"/>
    </location>
</feature>
<feature type="disulfide bond" description="Redox-active" evidence="1">
    <location>
        <begin position="73"/>
        <end position="76"/>
    </location>
</feature>
<keyword id="KW-1003">Cell membrane</keyword>
<keyword id="KW-0201">Cytochrome c-type biogenesis</keyword>
<keyword id="KW-1015">Disulfide bond</keyword>
<keyword id="KW-0472">Membrane</keyword>
<keyword id="KW-0560">Oxidoreductase</keyword>
<keyword id="KW-0676">Redox-active center</keyword>
<keyword id="KW-0735">Signal-anchor</keyword>
<keyword id="KW-0812">Transmembrane</keyword>
<keyword id="KW-1133">Transmembrane helix</keyword>
<accession>Q6HL81</accession>
<dbReference type="EMBL" id="AE017355">
    <property type="protein sequence ID" value="AAT63254.1"/>
    <property type="molecule type" value="Genomic_DNA"/>
</dbReference>
<dbReference type="RefSeq" id="WP_000742200.1">
    <property type="nucleotide sequence ID" value="NC_005957.1"/>
</dbReference>
<dbReference type="RefSeq" id="YP_035690.1">
    <property type="nucleotide sequence ID" value="NC_005957.1"/>
</dbReference>
<dbReference type="SMR" id="Q6HL81"/>
<dbReference type="KEGG" id="btk:BT9727_1356"/>
<dbReference type="PATRIC" id="fig|281309.8.peg.1427"/>
<dbReference type="HOGENOM" id="CLU_042529_11_2_9"/>
<dbReference type="UniPathway" id="UPA00555"/>
<dbReference type="Proteomes" id="UP000001301">
    <property type="component" value="Chromosome"/>
</dbReference>
<dbReference type="GO" id="GO:0005886">
    <property type="term" value="C:plasma membrane"/>
    <property type="evidence" value="ECO:0007669"/>
    <property type="project" value="UniProtKB-SubCell"/>
</dbReference>
<dbReference type="GO" id="GO:0016209">
    <property type="term" value="F:antioxidant activity"/>
    <property type="evidence" value="ECO:0007669"/>
    <property type="project" value="InterPro"/>
</dbReference>
<dbReference type="GO" id="GO:0015036">
    <property type="term" value="F:disulfide oxidoreductase activity"/>
    <property type="evidence" value="ECO:0007669"/>
    <property type="project" value="UniProtKB-UniRule"/>
</dbReference>
<dbReference type="GO" id="GO:0017004">
    <property type="term" value="P:cytochrome complex assembly"/>
    <property type="evidence" value="ECO:0007669"/>
    <property type="project" value="UniProtKB-UniRule"/>
</dbReference>
<dbReference type="CDD" id="cd02966">
    <property type="entry name" value="TlpA_like_family"/>
    <property type="match status" value="1"/>
</dbReference>
<dbReference type="Gene3D" id="3.40.30.10">
    <property type="entry name" value="Glutaredoxin"/>
    <property type="match status" value="1"/>
</dbReference>
<dbReference type="HAMAP" id="MF_01319">
    <property type="entry name" value="ResA"/>
    <property type="match status" value="1"/>
</dbReference>
<dbReference type="InterPro" id="IPR000866">
    <property type="entry name" value="AhpC/TSA"/>
</dbReference>
<dbReference type="InterPro" id="IPR023555">
    <property type="entry name" value="Thiol-dS_OxRdtase_ResA"/>
</dbReference>
<dbReference type="InterPro" id="IPR036249">
    <property type="entry name" value="Thioredoxin-like_sf"/>
</dbReference>
<dbReference type="InterPro" id="IPR013766">
    <property type="entry name" value="Thioredoxin_domain"/>
</dbReference>
<dbReference type="InterPro" id="IPR050553">
    <property type="entry name" value="Thioredoxin_ResA/DsbE_sf"/>
</dbReference>
<dbReference type="NCBIfam" id="NF002854">
    <property type="entry name" value="PRK03147.1"/>
    <property type="match status" value="1"/>
</dbReference>
<dbReference type="PANTHER" id="PTHR42852">
    <property type="entry name" value="THIOL:DISULFIDE INTERCHANGE PROTEIN DSBE"/>
    <property type="match status" value="1"/>
</dbReference>
<dbReference type="PANTHER" id="PTHR42852:SF6">
    <property type="entry name" value="THIOL:DISULFIDE INTERCHANGE PROTEIN DSBE"/>
    <property type="match status" value="1"/>
</dbReference>
<dbReference type="Pfam" id="PF00578">
    <property type="entry name" value="AhpC-TSA"/>
    <property type="match status" value="1"/>
</dbReference>
<dbReference type="SUPFAM" id="SSF52833">
    <property type="entry name" value="Thioredoxin-like"/>
    <property type="match status" value="1"/>
</dbReference>
<dbReference type="PROSITE" id="PS51352">
    <property type="entry name" value="THIOREDOXIN_2"/>
    <property type="match status" value="1"/>
</dbReference>
<protein>
    <recommendedName>
        <fullName evidence="1">Thiol-disulfide oxidoreductase ResA</fullName>
    </recommendedName>
</protein>
<reference key="1">
    <citation type="journal article" date="2006" name="J. Bacteriol.">
        <title>Pathogenomic sequence analysis of Bacillus cereus and Bacillus thuringiensis isolates closely related to Bacillus anthracis.</title>
        <authorList>
            <person name="Han C.S."/>
            <person name="Xie G."/>
            <person name="Challacombe J.F."/>
            <person name="Altherr M.R."/>
            <person name="Bhotika S.S."/>
            <person name="Bruce D."/>
            <person name="Campbell C.S."/>
            <person name="Campbell M.L."/>
            <person name="Chen J."/>
            <person name="Chertkov O."/>
            <person name="Cleland C."/>
            <person name="Dimitrijevic M."/>
            <person name="Doggett N.A."/>
            <person name="Fawcett J.J."/>
            <person name="Glavina T."/>
            <person name="Goodwin L.A."/>
            <person name="Hill K.K."/>
            <person name="Hitchcock P."/>
            <person name="Jackson P.J."/>
            <person name="Keim P."/>
            <person name="Kewalramani A.R."/>
            <person name="Longmire J."/>
            <person name="Lucas S."/>
            <person name="Malfatti S."/>
            <person name="McMurry K."/>
            <person name="Meincke L.J."/>
            <person name="Misra M."/>
            <person name="Moseman B.L."/>
            <person name="Mundt M."/>
            <person name="Munk A.C."/>
            <person name="Okinaka R.T."/>
            <person name="Parson-Quintana B."/>
            <person name="Reilly L.P."/>
            <person name="Richardson P."/>
            <person name="Robinson D.L."/>
            <person name="Rubin E."/>
            <person name="Saunders E."/>
            <person name="Tapia R."/>
            <person name="Tesmer J.G."/>
            <person name="Thayer N."/>
            <person name="Thompson L.S."/>
            <person name="Tice H."/>
            <person name="Ticknor L.O."/>
            <person name="Wills P.L."/>
            <person name="Brettin T.S."/>
            <person name="Gilna P."/>
        </authorList>
    </citation>
    <scope>NUCLEOTIDE SEQUENCE [LARGE SCALE GENOMIC DNA]</scope>
    <source>
        <strain>97-27</strain>
    </source>
</reference>